<comment type="function">
    <text>Activator of nitrite and nitric oxide reductases.</text>
</comment>
<comment type="subcellular location">
    <subcellularLocation>
        <location evidence="2">Cytoplasm</location>
    </subcellularLocation>
</comment>
<comment type="induction">
    <text>Under denitrifying conditions.</text>
</comment>
<comment type="similarity">
    <text evidence="2">Belongs to the CbbQ/NirQ/NorQ/GpvN family.</text>
</comment>
<name>NIRQ_STUST</name>
<gene>
    <name type="primary">nirQ</name>
</gene>
<dbReference type="EMBL" id="X53676">
    <property type="protein sequence ID" value="CAA78998.1"/>
    <property type="molecule type" value="Genomic_DNA"/>
</dbReference>
<dbReference type="PIR" id="S27012">
    <property type="entry name" value="S27012"/>
</dbReference>
<dbReference type="SMR" id="Q02441"/>
<dbReference type="eggNOG" id="COG0714">
    <property type="taxonomic scope" value="Bacteria"/>
</dbReference>
<dbReference type="GO" id="GO:0005737">
    <property type="term" value="C:cytoplasm"/>
    <property type="evidence" value="ECO:0007669"/>
    <property type="project" value="UniProtKB-SubCell"/>
</dbReference>
<dbReference type="GO" id="GO:0005524">
    <property type="term" value="F:ATP binding"/>
    <property type="evidence" value="ECO:0007669"/>
    <property type="project" value="UniProtKB-KW"/>
</dbReference>
<dbReference type="GO" id="GO:0016887">
    <property type="term" value="F:ATP hydrolysis activity"/>
    <property type="evidence" value="ECO:0007669"/>
    <property type="project" value="InterPro"/>
</dbReference>
<dbReference type="GO" id="GO:0003677">
    <property type="term" value="F:DNA binding"/>
    <property type="evidence" value="ECO:0007669"/>
    <property type="project" value="UniProtKB-KW"/>
</dbReference>
<dbReference type="Gene3D" id="3.40.50.300">
    <property type="entry name" value="P-loop containing nucleotide triphosphate hydrolases"/>
    <property type="match status" value="1"/>
</dbReference>
<dbReference type="InterPro" id="IPR011704">
    <property type="entry name" value="ATPase_dyneun-rel_AAA"/>
</dbReference>
<dbReference type="InterPro" id="IPR050764">
    <property type="entry name" value="CbbQ/NirQ/NorQ/GpvN"/>
</dbReference>
<dbReference type="InterPro" id="IPR013615">
    <property type="entry name" value="CbbQ_C"/>
</dbReference>
<dbReference type="InterPro" id="IPR027417">
    <property type="entry name" value="P-loop_NTPase"/>
</dbReference>
<dbReference type="PANTHER" id="PTHR42759:SF7">
    <property type="entry name" value="DENITRIFICATION REGULATORY PROTEIN NIRQ"/>
    <property type="match status" value="1"/>
</dbReference>
<dbReference type="PANTHER" id="PTHR42759">
    <property type="entry name" value="MOXR FAMILY PROTEIN"/>
    <property type="match status" value="1"/>
</dbReference>
<dbReference type="Pfam" id="PF07728">
    <property type="entry name" value="AAA_5"/>
    <property type="match status" value="1"/>
</dbReference>
<dbReference type="Pfam" id="PF08406">
    <property type="entry name" value="CbbQ_C"/>
    <property type="match status" value="1"/>
</dbReference>
<dbReference type="SUPFAM" id="SSF52540">
    <property type="entry name" value="P-loop containing nucleoside triphosphate hydrolases"/>
    <property type="match status" value="1"/>
</dbReference>
<reference key="1">
    <citation type="journal article" date="1992" name="FEBS Lett.">
        <title>Interdependence of respiratory NO reduction and nitrite reduction revealed by mutagenesis of nirQ, a novel gene in the denitrification gene cluster of Pseudomonas stutzeri.</title>
        <authorList>
            <person name="Juengst A."/>
            <person name="Zumft W.G."/>
        </authorList>
    </citation>
    <scope>NUCLEOTIDE SEQUENCE [GENOMIC DNA]</scope>
    <source>
        <strain>ATCC 14405 / JCM 20778 / CIP 107696 / IAM 12931 / LMG 2243 / NCIMB 568 / Baumann 218 / ZoBell 632</strain>
    </source>
</reference>
<sequence length="275" mass="30544">MRYLPVNAIEIPTTAGTPDAPFYQPLGNEEQLFQQAWQHGMPVLIKGPTGCGKTRFVQHMAHRLNLPLYTVACHDDLSAADLVGRHLIGAQGTWWQDGPLTRAVREGGICYLDEVVEARQDTAVVLHPLADDRRELFIERTGEALKAPPGFMLVVSYNPGYQNLLKGMKPSTRQRFVAMRFDYPPTAEEERIVANEAQVDAALAAQVVKLGQALRRLEQHDLEEVASTRLLIFTARMIRSGMTPRQACLACLAEPLSDDPQTVAALMDVVYVHFG</sequence>
<feature type="chain" id="PRO_0000219570" description="Denitrification regulatory protein NirQ">
    <location>
        <begin position="1"/>
        <end position="275"/>
    </location>
</feature>
<feature type="DNA-binding region" description="H-T-H motif" evidence="1">
    <location>
        <begin position="249"/>
        <end position="268"/>
    </location>
</feature>
<feature type="binding site" evidence="1">
    <location>
        <begin position="47"/>
        <end position="54"/>
    </location>
    <ligand>
        <name>ATP</name>
        <dbReference type="ChEBI" id="CHEBI:30616"/>
    </ligand>
</feature>
<feature type="binding site" evidence="1">
    <location>
        <begin position="107"/>
        <end position="114"/>
    </location>
    <ligand>
        <name>ATP</name>
        <dbReference type="ChEBI" id="CHEBI:30616"/>
    </ligand>
</feature>
<accession>Q02441</accession>
<proteinExistence type="evidence at transcript level"/>
<evidence type="ECO:0000255" key="1"/>
<evidence type="ECO:0000305" key="2"/>
<protein>
    <recommendedName>
        <fullName>Denitrification regulatory protein NirQ</fullName>
    </recommendedName>
</protein>
<keyword id="KW-0010">Activator</keyword>
<keyword id="KW-0067">ATP-binding</keyword>
<keyword id="KW-0963">Cytoplasm</keyword>
<keyword id="KW-0238">DNA-binding</keyword>
<keyword id="KW-0547">Nucleotide-binding</keyword>
<keyword id="KW-0804">Transcription</keyword>
<keyword id="KW-0805">Transcription regulation</keyword>
<organism>
    <name type="scientific">Stutzerimonas stutzeri</name>
    <name type="common">Pseudomonas stutzeri</name>
    <dbReference type="NCBI Taxonomy" id="316"/>
    <lineage>
        <taxon>Bacteria</taxon>
        <taxon>Pseudomonadati</taxon>
        <taxon>Pseudomonadota</taxon>
        <taxon>Gammaproteobacteria</taxon>
        <taxon>Pseudomonadales</taxon>
        <taxon>Pseudomonadaceae</taxon>
        <taxon>Stutzerimonas</taxon>
    </lineage>
</organism>